<accession>Q3YZE3</accession>
<feature type="chain" id="PRO_0000298437" description="Putative ion-transport protein YfeO">
    <location>
        <begin position="1"/>
        <end position="418"/>
    </location>
</feature>
<feature type="transmembrane region" description="Helical" evidence="1">
    <location>
        <begin position="10"/>
        <end position="30"/>
    </location>
</feature>
<feature type="transmembrane region" description="Helical" evidence="1">
    <location>
        <begin position="54"/>
        <end position="74"/>
    </location>
</feature>
<feature type="transmembrane region" description="Helical" evidence="1">
    <location>
        <begin position="99"/>
        <end position="119"/>
    </location>
</feature>
<feature type="transmembrane region" description="Helical" evidence="1">
    <location>
        <begin position="120"/>
        <end position="140"/>
    </location>
</feature>
<feature type="transmembrane region" description="Helical" evidence="1">
    <location>
        <begin position="149"/>
        <end position="169"/>
    </location>
</feature>
<feature type="transmembrane region" description="Helical" evidence="1">
    <location>
        <begin position="186"/>
        <end position="206"/>
    </location>
</feature>
<feature type="transmembrane region" description="Helical" evidence="1">
    <location>
        <begin position="223"/>
        <end position="243"/>
    </location>
</feature>
<feature type="transmembrane region" description="Helical" evidence="1">
    <location>
        <begin position="258"/>
        <end position="278"/>
    </location>
</feature>
<feature type="transmembrane region" description="Helical" evidence="1">
    <location>
        <begin position="300"/>
        <end position="320"/>
    </location>
</feature>
<feature type="transmembrane region" description="Helical" evidence="1">
    <location>
        <begin position="322"/>
        <end position="342"/>
    </location>
</feature>
<feature type="transmembrane region" description="Helical" evidence="1">
    <location>
        <begin position="343"/>
        <end position="363"/>
    </location>
</feature>
<feature type="transmembrane region" description="Helical" evidence="1">
    <location>
        <begin position="371"/>
        <end position="391"/>
    </location>
</feature>
<gene>
    <name evidence="1" type="primary">yfeO</name>
    <name type="ordered locus">SSON_2481</name>
</gene>
<evidence type="ECO:0000255" key="1">
    <source>
        <dbReference type="HAMAP-Rule" id="MF_01115"/>
    </source>
</evidence>
<name>YFEO_SHISS</name>
<protein>
    <recommendedName>
        <fullName evidence="1">Putative ion-transport protein YfeO</fullName>
    </recommendedName>
</protein>
<comment type="subcellular location">
    <subcellularLocation>
        <location evidence="1">Cell membrane</location>
        <topology evidence="1">Multi-pass membrane protein</topology>
    </subcellularLocation>
</comment>
<comment type="similarity">
    <text evidence="1">Belongs to the chloride channel (TC 2.A.49) family.</text>
</comment>
<keyword id="KW-1003">Cell membrane</keyword>
<keyword id="KW-0407">Ion channel</keyword>
<keyword id="KW-0406">Ion transport</keyword>
<keyword id="KW-0472">Membrane</keyword>
<keyword id="KW-1185">Reference proteome</keyword>
<keyword id="KW-0812">Transmembrane</keyword>
<keyword id="KW-1133">Transmembrane helix</keyword>
<keyword id="KW-0813">Transport</keyword>
<reference key="1">
    <citation type="journal article" date="2005" name="Nucleic Acids Res.">
        <title>Genome dynamics and diversity of Shigella species, the etiologic agents of bacillary dysentery.</title>
        <authorList>
            <person name="Yang F."/>
            <person name="Yang J."/>
            <person name="Zhang X."/>
            <person name="Chen L."/>
            <person name="Jiang Y."/>
            <person name="Yan Y."/>
            <person name="Tang X."/>
            <person name="Wang J."/>
            <person name="Xiong Z."/>
            <person name="Dong J."/>
            <person name="Xue Y."/>
            <person name="Zhu Y."/>
            <person name="Xu X."/>
            <person name="Sun L."/>
            <person name="Chen S."/>
            <person name="Nie H."/>
            <person name="Peng J."/>
            <person name="Xu J."/>
            <person name="Wang Y."/>
            <person name="Yuan Z."/>
            <person name="Wen Y."/>
            <person name="Yao Z."/>
            <person name="Shen Y."/>
            <person name="Qiang B."/>
            <person name="Hou Y."/>
            <person name="Yu J."/>
            <person name="Jin Q."/>
        </authorList>
    </citation>
    <scope>NUCLEOTIDE SEQUENCE [LARGE SCALE GENOMIC DNA]</scope>
    <source>
        <strain>Ss046</strain>
    </source>
</reference>
<dbReference type="EMBL" id="CP000038">
    <property type="protein sequence ID" value="AAZ89119.1"/>
    <property type="molecule type" value="Genomic_DNA"/>
</dbReference>
<dbReference type="RefSeq" id="WP_000903129.1">
    <property type="nucleotide sequence ID" value="NC_007384.1"/>
</dbReference>
<dbReference type="SMR" id="Q3YZE3"/>
<dbReference type="KEGG" id="ssn:SSON_2481"/>
<dbReference type="HOGENOM" id="CLU_053130_0_0_6"/>
<dbReference type="Proteomes" id="UP000002529">
    <property type="component" value="Chromosome"/>
</dbReference>
<dbReference type="GO" id="GO:0005886">
    <property type="term" value="C:plasma membrane"/>
    <property type="evidence" value="ECO:0007669"/>
    <property type="project" value="UniProtKB-SubCell"/>
</dbReference>
<dbReference type="GO" id="GO:0015108">
    <property type="term" value="F:chloride transmembrane transporter activity"/>
    <property type="evidence" value="ECO:0007669"/>
    <property type="project" value="InterPro"/>
</dbReference>
<dbReference type="GO" id="GO:0005216">
    <property type="term" value="F:monoatomic ion channel activity"/>
    <property type="evidence" value="ECO:0007669"/>
    <property type="project" value="UniProtKB-UniRule"/>
</dbReference>
<dbReference type="CDD" id="cd00400">
    <property type="entry name" value="Voltage_gated_ClC"/>
    <property type="match status" value="1"/>
</dbReference>
<dbReference type="FunFam" id="1.10.3080.10:FF:000007">
    <property type="entry name" value="Putative ion-transport protein YfeO"/>
    <property type="match status" value="1"/>
</dbReference>
<dbReference type="Gene3D" id="1.10.3080.10">
    <property type="entry name" value="Clc chloride channel"/>
    <property type="match status" value="1"/>
</dbReference>
<dbReference type="HAMAP" id="MF_01115">
    <property type="entry name" value="CLC_YfeO"/>
    <property type="match status" value="1"/>
</dbReference>
<dbReference type="InterPro" id="IPR022969">
    <property type="entry name" value="Chloride_channel_YfeO"/>
</dbReference>
<dbReference type="InterPro" id="IPR014743">
    <property type="entry name" value="Cl-channel_core"/>
</dbReference>
<dbReference type="InterPro" id="IPR001807">
    <property type="entry name" value="ClC"/>
</dbReference>
<dbReference type="InterPro" id="IPR050368">
    <property type="entry name" value="ClC-type_chloride_channel"/>
</dbReference>
<dbReference type="NCBIfam" id="NF002971">
    <property type="entry name" value="PRK03655.1"/>
    <property type="match status" value="1"/>
</dbReference>
<dbReference type="PANTHER" id="PTHR43427">
    <property type="entry name" value="CHLORIDE CHANNEL PROTEIN CLC-E"/>
    <property type="match status" value="1"/>
</dbReference>
<dbReference type="PANTHER" id="PTHR43427:SF9">
    <property type="entry name" value="ION-TRANSPORT PROTEIN YFEO-RELATED"/>
    <property type="match status" value="1"/>
</dbReference>
<dbReference type="Pfam" id="PF00654">
    <property type="entry name" value="Voltage_CLC"/>
    <property type="match status" value="1"/>
</dbReference>
<dbReference type="PRINTS" id="PR00762">
    <property type="entry name" value="CLCHANNEL"/>
</dbReference>
<dbReference type="SUPFAM" id="SSF81340">
    <property type="entry name" value="Clc chloride channel"/>
    <property type="match status" value="1"/>
</dbReference>
<proteinExistence type="inferred from homology"/>
<sequence length="418" mass="43551">MLHPRARTMLLLSLPAVAIGIASSLILIVVMKIASVLQNLLWQRLPGTLGIAQDSPIWIIGVLTLTGIAVGLVIRFSQGHAGPDPACEPLIGAPVPPSALPGLIVALILGLAGGVSLGPEHPIMTVNIALAVAIGARLLPRVNRMEWTILASAGTIGALFGTPVAAALIFSQTLNGSSEVPLWDRLFAPLMAAAAGALTTGLFFHPHFSLPIAHYGQMEMTDILSGAIVAAIAIAAGMVAVWCLPRLHAMMNQMKNPVLVLGIGGFILGILGVIGGPVSLFKGLDEMQQMVANQAFSTSDYFLLAVIKLAALVVAAASGFRGGRIFPAVFVGVALGLMLHEHVPAVPAAITVSCAILGIVLVVTRDGWLSLFMAAVVVPNTTLLPLLCIVMLPAWLLLAGKPMMMVNRPKQQPPHDNV</sequence>
<organism>
    <name type="scientific">Shigella sonnei (strain Ss046)</name>
    <dbReference type="NCBI Taxonomy" id="300269"/>
    <lineage>
        <taxon>Bacteria</taxon>
        <taxon>Pseudomonadati</taxon>
        <taxon>Pseudomonadota</taxon>
        <taxon>Gammaproteobacteria</taxon>
        <taxon>Enterobacterales</taxon>
        <taxon>Enterobacteriaceae</taxon>
        <taxon>Shigella</taxon>
    </lineage>
</organism>